<geneLocation type="mitochondrion"/>
<protein>
    <recommendedName>
        <fullName>NADH-ubiquinone oxidoreductase chain 6</fullName>
        <ecNumber evidence="1">7.1.1.2</ecNumber>
    </recommendedName>
    <alternativeName>
        <fullName>NADH dehydrogenase subunit 6</fullName>
    </alternativeName>
</protein>
<dbReference type="EC" id="7.1.1.2" evidence="1"/>
<dbReference type="EMBL" id="AF321050">
    <property type="protein sequence ID" value="AAG37924.1"/>
    <property type="molecule type" value="Genomic_DNA"/>
</dbReference>
<dbReference type="RefSeq" id="NP_071653.1">
    <property type="nucleotide sequence ID" value="NC_002619.1"/>
</dbReference>
<dbReference type="SMR" id="Q9G3S5"/>
<dbReference type="GeneID" id="802290"/>
<dbReference type="CTD" id="4541"/>
<dbReference type="GO" id="GO:0005743">
    <property type="term" value="C:mitochondrial inner membrane"/>
    <property type="evidence" value="ECO:0000250"/>
    <property type="project" value="UniProtKB"/>
</dbReference>
<dbReference type="GO" id="GO:0008137">
    <property type="term" value="F:NADH dehydrogenase (ubiquinone) activity"/>
    <property type="evidence" value="ECO:0000250"/>
    <property type="project" value="UniProtKB"/>
</dbReference>
<dbReference type="GO" id="GO:0006120">
    <property type="term" value="P:mitochondrial electron transport, NADH to ubiquinone"/>
    <property type="evidence" value="ECO:0000250"/>
    <property type="project" value="UniProtKB"/>
</dbReference>
<dbReference type="GO" id="GO:0032981">
    <property type="term" value="P:mitochondrial respiratory chain complex I assembly"/>
    <property type="evidence" value="ECO:0000250"/>
    <property type="project" value="UniProtKB"/>
</dbReference>
<dbReference type="Gene3D" id="1.20.120.1200">
    <property type="entry name" value="NADH-ubiquinone/plastoquinone oxidoreductase chain 6, subunit NuoJ"/>
    <property type="match status" value="1"/>
</dbReference>
<dbReference type="InterPro" id="IPR050269">
    <property type="entry name" value="ComplexI_Subunit6"/>
</dbReference>
<dbReference type="InterPro" id="IPR001457">
    <property type="entry name" value="NADH_UbQ/plastoQ_OxRdtase_su6"/>
</dbReference>
<dbReference type="InterPro" id="IPR042106">
    <property type="entry name" value="Nuo/plastoQ_OxRdtase_6_NuoJ"/>
</dbReference>
<dbReference type="PANTHER" id="PTHR11435">
    <property type="entry name" value="NADH UBIQUINONE OXIDOREDUCTASE SUBUNIT ND6"/>
    <property type="match status" value="1"/>
</dbReference>
<dbReference type="PANTHER" id="PTHR11435:SF1">
    <property type="entry name" value="NADH-UBIQUINONE OXIDOREDUCTASE CHAIN 6"/>
    <property type="match status" value="1"/>
</dbReference>
<dbReference type="Pfam" id="PF00499">
    <property type="entry name" value="Oxidored_q3"/>
    <property type="match status" value="1"/>
</dbReference>
<reference key="1">
    <citation type="journal article" date="2001" name="Mol. Biol. Evol.">
        <title>Implications for bat evolution from two new complete mitochondrial genomes.</title>
        <authorList>
            <person name="Lin Y.-H."/>
            <person name="Penny D."/>
        </authorList>
    </citation>
    <scope>NUCLEOTIDE SEQUENCE [GENOMIC DNA]</scope>
</reference>
<evidence type="ECO:0000250" key="1">
    <source>
        <dbReference type="UniProtKB" id="P03923"/>
    </source>
</evidence>
<evidence type="ECO:0000250" key="2">
    <source>
        <dbReference type="UniProtKB" id="P03924"/>
    </source>
</evidence>
<evidence type="ECO:0000255" key="3"/>
<evidence type="ECO:0000305" key="4"/>
<keyword id="KW-0249">Electron transport</keyword>
<keyword id="KW-0472">Membrane</keyword>
<keyword id="KW-0496">Mitochondrion</keyword>
<keyword id="KW-0999">Mitochondrion inner membrane</keyword>
<keyword id="KW-0520">NAD</keyword>
<keyword id="KW-0679">Respiratory chain</keyword>
<keyword id="KW-1278">Translocase</keyword>
<keyword id="KW-0812">Transmembrane</keyword>
<keyword id="KW-1133">Transmembrane helix</keyword>
<keyword id="KW-0813">Transport</keyword>
<feature type="chain" id="PRO_0000118323" description="NADH-ubiquinone oxidoreductase chain 6">
    <location>
        <begin position="1"/>
        <end position="175"/>
    </location>
</feature>
<feature type="transmembrane region" description="Helical" evidence="3">
    <location>
        <begin position="1"/>
        <end position="21"/>
    </location>
</feature>
<feature type="transmembrane region" description="Helical" evidence="3">
    <location>
        <begin position="27"/>
        <end position="47"/>
    </location>
</feature>
<feature type="transmembrane region" description="Helical" evidence="3">
    <location>
        <begin position="49"/>
        <end position="69"/>
    </location>
</feature>
<feature type="transmembrane region" description="Helical" evidence="3">
    <location>
        <begin position="88"/>
        <end position="108"/>
    </location>
</feature>
<feature type="transmembrane region" description="Helical" evidence="3">
    <location>
        <begin position="149"/>
        <end position="169"/>
    </location>
</feature>
<gene>
    <name type="primary">MT-ND6</name>
    <name type="synonym">MTND6</name>
    <name type="synonym">NADH6</name>
    <name type="synonym">ND6</name>
</gene>
<accession>Q9G3S5</accession>
<organism>
    <name type="scientific">Pteropus scapulatus</name>
    <name type="common">Little red flying fox</name>
    <dbReference type="NCBI Taxonomy" id="94117"/>
    <lineage>
        <taxon>Eukaryota</taxon>
        <taxon>Metazoa</taxon>
        <taxon>Chordata</taxon>
        <taxon>Craniata</taxon>
        <taxon>Vertebrata</taxon>
        <taxon>Euteleostomi</taxon>
        <taxon>Mammalia</taxon>
        <taxon>Eutheria</taxon>
        <taxon>Laurasiatheria</taxon>
        <taxon>Chiroptera</taxon>
        <taxon>Yinpterochiroptera</taxon>
        <taxon>Pteropodoidea</taxon>
        <taxon>Pteropodidae</taxon>
        <taxon>Pteropodinae</taxon>
        <taxon>Pteropus</taxon>
    </lineage>
</organism>
<comment type="function">
    <text evidence="1">Core subunit of the mitochondrial membrane respiratory chain NADH dehydrogenase (Complex I) which catalyzes electron transfer from NADH through the respiratory chain, using ubiquinone as an electron acceptor. Essential for the catalytic activity and assembly of complex I.</text>
</comment>
<comment type="catalytic activity">
    <reaction evidence="1">
        <text>a ubiquinone + NADH + 5 H(+)(in) = a ubiquinol + NAD(+) + 4 H(+)(out)</text>
        <dbReference type="Rhea" id="RHEA:29091"/>
        <dbReference type="Rhea" id="RHEA-COMP:9565"/>
        <dbReference type="Rhea" id="RHEA-COMP:9566"/>
        <dbReference type="ChEBI" id="CHEBI:15378"/>
        <dbReference type="ChEBI" id="CHEBI:16389"/>
        <dbReference type="ChEBI" id="CHEBI:17976"/>
        <dbReference type="ChEBI" id="CHEBI:57540"/>
        <dbReference type="ChEBI" id="CHEBI:57945"/>
        <dbReference type="EC" id="7.1.1.2"/>
    </reaction>
</comment>
<comment type="subunit">
    <text evidence="2">Core subunit of respiratory chain NADH dehydrogenase (Complex I) which is composed of 45 different subunits.</text>
</comment>
<comment type="subcellular location">
    <subcellularLocation>
        <location evidence="2">Mitochondrion inner membrane</location>
        <topology evidence="3">Multi-pass membrane protein</topology>
    </subcellularLocation>
</comment>
<comment type="similarity">
    <text evidence="4">Belongs to the complex I subunit 6 family.</text>
</comment>
<sequence length="175" mass="18843">MMTYIVFILSTVFVVGFVGFSSKPSPVYGGVGLIVSGGVGCGIIMNFSGSFLGLMVFLIYLGGMMVVFGYTAAMATELYPEVWVSNKVVFGAFVFGLFMEMLLVLYVLKEGSVGIAFEFSNLGDWVVYGVEDSGYFSKEAVGISSLYSYGMWLVVVTGWSLFIAVVVVMEVTRGG</sequence>
<proteinExistence type="inferred from homology"/>
<name>NU6M_PTESA</name>